<protein>
    <recommendedName>
        <fullName evidence="1">Isoprenyl transferase</fullName>
        <ecNumber evidence="1">2.5.1.-</ecNumber>
    </recommendedName>
</protein>
<gene>
    <name evidence="1" type="primary">uppS</name>
    <name type="ordered locus">BruAb1_1164</name>
</gene>
<keyword id="KW-0460">Magnesium</keyword>
<keyword id="KW-0479">Metal-binding</keyword>
<keyword id="KW-0808">Transferase</keyword>
<name>ISPT_BRUAB</name>
<sequence>MSDPRHIAIIMDGNGRWAKARGLPRSAGHRAGVEALREIVRAAGDRGLGYLTLFAFSSENWTRPSGEVSDLLGLLKLFIRRDLAELHRNNVRVNIIGERAELAANIRALLNEAESLTHRNTGLNLVIAFNYGSRDEIVRAVRSLARDVAAGLLDPSSISAELVSANLDTAGIPDPDLIIRTSGEMRLSNFLLWQAAYSEFLFLPCHWPDFRPADLDAAYETFRQRERRFGGVEPRASADAEEEILCPSTKGAAV</sequence>
<feature type="chain" id="PRO_0000123581" description="Isoprenyl transferase">
    <location>
        <begin position="1"/>
        <end position="254"/>
    </location>
</feature>
<feature type="active site" evidence="1">
    <location>
        <position position="12"/>
    </location>
</feature>
<feature type="active site" description="Proton acceptor" evidence="1">
    <location>
        <position position="60"/>
    </location>
</feature>
<feature type="binding site" evidence="1">
    <location>
        <position position="12"/>
    </location>
    <ligand>
        <name>Mg(2+)</name>
        <dbReference type="ChEBI" id="CHEBI:18420"/>
    </ligand>
</feature>
<feature type="binding site" evidence="1">
    <location>
        <begin position="13"/>
        <end position="16"/>
    </location>
    <ligand>
        <name>substrate</name>
    </ligand>
</feature>
<feature type="binding site" evidence="1">
    <location>
        <position position="17"/>
    </location>
    <ligand>
        <name>substrate</name>
    </ligand>
</feature>
<feature type="binding site" evidence="1">
    <location>
        <position position="25"/>
    </location>
    <ligand>
        <name>substrate</name>
    </ligand>
</feature>
<feature type="binding site" evidence="1">
    <location>
        <position position="29"/>
    </location>
    <ligand>
        <name>substrate</name>
    </ligand>
</feature>
<feature type="binding site" evidence="1">
    <location>
        <begin position="57"/>
        <end position="59"/>
    </location>
    <ligand>
        <name>substrate</name>
    </ligand>
</feature>
<feature type="binding site" evidence="1">
    <location>
        <position position="61"/>
    </location>
    <ligand>
        <name>substrate</name>
    </ligand>
</feature>
<feature type="binding site" evidence="1">
    <location>
        <position position="63"/>
    </location>
    <ligand>
        <name>substrate</name>
    </ligand>
</feature>
<feature type="binding site" evidence="1">
    <location>
        <position position="180"/>
    </location>
    <ligand>
        <name>substrate</name>
    </ligand>
</feature>
<feature type="binding site" evidence="1">
    <location>
        <begin position="186"/>
        <end position="188"/>
    </location>
    <ligand>
        <name>substrate</name>
    </ligand>
</feature>
<feature type="binding site" evidence="1">
    <location>
        <position position="199"/>
    </location>
    <ligand>
        <name>Mg(2+)</name>
        <dbReference type="ChEBI" id="CHEBI:18420"/>
    </ligand>
</feature>
<dbReference type="EC" id="2.5.1.-" evidence="1"/>
<dbReference type="EMBL" id="AE017223">
    <property type="protein sequence ID" value="AAX74503.1"/>
    <property type="molecule type" value="Genomic_DNA"/>
</dbReference>
<dbReference type="RefSeq" id="WP_002964285.1">
    <property type="nucleotide sequence ID" value="NC_006932.1"/>
</dbReference>
<dbReference type="SMR" id="Q57CY1"/>
<dbReference type="EnsemblBacteria" id="AAX74503">
    <property type="protein sequence ID" value="AAX74503"/>
    <property type="gene ID" value="BruAb1_1164"/>
</dbReference>
<dbReference type="KEGG" id="bmb:BruAb1_1164"/>
<dbReference type="HOGENOM" id="CLU_038505_1_1_5"/>
<dbReference type="PRO" id="PR:Q57CY1"/>
<dbReference type="Proteomes" id="UP000000540">
    <property type="component" value="Chromosome I"/>
</dbReference>
<dbReference type="GO" id="GO:0005829">
    <property type="term" value="C:cytosol"/>
    <property type="evidence" value="ECO:0007669"/>
    <property type="project" value="TreeGrafter"/>
</dbReference>
<dbReference type="GO" id="GO:0008834">
    <property type="term" value="F:ditrans,polycis-undecaprenyl-diphosphate synthase [(2E,6E)-farnesyl-diphosphate specific] activity"/>
    <property type="evidence" value="ECO:0007669"/>
    <property type="project" value="TreeGrafter"/>
</dbReference>
<dbReference type="GO" id="GO:0000287">
    <property type="term" value="F:magnesium ion binding"/>
    <property type="evidence" value="ECO:0007669"/>
    <property type="project" value="UniProtKB-UniRule"/>
</dbReference>
<dbReference type="GO" id="GO:0016094">
    <property type="term" value="P:polyprenol biosynthetic process"/>
    <property type="evidence" value="ECO:0007669"/>
    <property type="project" value="TreeGrafter"/>
</dbReference>
<dbReference type="CDD" id="cd00475">
    <property type="entry name" value="Cis_IPPS"/>
    <property type="match status" value="1"/>
</dbReference>
<dbReference type="FunFam" id="3.40.1180.10:FF:000001">
    <property type="entry name" value="(2E,6E)-farnesyl-diphosphate-specific ditrans,polycis-undecaprenyl-diphosphate synthase"/>
    <property type="match status" value="1"/>
</dbReference>
<dbReference type="Gene3D" id="3.40.1180.10">
    <property type="entry name" value="Decaprenyl diphosphate synthase-like"/>
    <property type="match status" value="1"/>
</dbReference>
<dbReference type="HAMAP" id="MF_01139">
    <property type="entry name" value="ISPT"/>
    <property type="match status" value="1"/>
</dbReference>
<dbReference type="InterPro" id="IPR001441">
    <property type="entry name" value="UPP_synth-like"/>
</dbReference>
<dbReference type="InterPro" id="IPR018520">
    <property type="entry name" value="UPP_synth-like_CS"/>
</dbReference>
<dbReference type="InterPro" id="IPR036424">
    <property type="entry name" value="UPP_synth-like_sf"/>
</dbReference>
<dbReference type="NCBIfam" id="NF011405">
    <property type="entry name" value="PRK14830.1"/>
    <property type="match status" value="1"/>
</dbReference>
<dbReference type="NCBIfam" id="NF011408">
    <property type="entry name" value="PRK14834.1"/>
    <property type="match status" value="1"/>
</dbReference>
<dbReference type="NCBIfam" id="TIGR00055">
    <property type="entry name" value="uppS"/>
    <property type="match status" value="1"/>
</dbReference>
<dbReference type="PANTHER" id="PTHR10291:SF0">
    <property type="entry name" value="DEHYDRODOLICHYL DIPHOSPHATE SYNTHASE 2"/>
    <property type="match status" value="1"/>
</dbReference>
<dbReference type="PANTHER" id="PTHR10291">
    <property type="entry name" value="DEHYDRODOLICHYL DIPHOSPHATE SYNTHASE FAMILY MEMBER"/>
    <property type="match status" value="1"/>
</dbReference>
<dbReference type="Pfam" id="PF01255">
    <property type="entry name" value="Prenyltransf"/>
    <property type="match status" value="1"/>
</dbReference>
<dbReference type="SUPFAM" id="SSF64005">
    <property type="entry name" value="Undecaprenyl diphosphate synthase"/>
    <property type="match status" value="1"/>
</dbReference>
<dbReference type="PROSITE" id="PS01066">
    <property type="entry name" value="UPP_SYNTHASE"/>
    <property type="match status" value="1"/>
</dbReference>
<reference key="1">
    <citation type="journal article" date="2005" name="J. Bacteriol.">
        <title>Completion of the genome sequence of Brucella abortus and comparison to the highly similar genomes of Brucella melitensis and Brucella suis.</title>
        <authorList>
            <person name="Halling S.M."/>
            <person name="Peterson-Burch B.D."/>
            <person name="Bricker B.J."/>
            <person name="Zuerner R.L."/>
            <person name="Qing Z."/>
            <person name="Li L.-L."/>
            <person name="Kapur V."/>
            <person name="Alt D.P."/>
            <person name="Olsen S.C."/>
        </authorList>
    </citation>
    <scope>NUCLEOTIDE SEQUENCE [LARGE SCALE GENOMIC DNA]</scope>
    <source>
        <strain>9-941</strain>
    </source>
</reference>
<comment type="function">
    <text evidence="1">Catalyzes the condensation of isopentenyl diphosphate (IPP) with allylic pyrophosphates generating different type of terpenoids.</text>
</comment>
<comment type="cofactor">
    <cofactor evidence="1">
        <name>Mg(2+)</name>
        <dbReference type="ChEBI" id="CHEBI:18420"/>
    </cofactor>
    <text evidence="1">Binds 2 magnesium ions per subunit.</text>
</comment>
<comment type="subunit">
    <text evidence="1">Homodimer.</text>
</comment>
<comment type="similarity">
    <text evidence="1">Belongs to the UPP synthase family.</text>
</comment>
<organism>
    <name type="scientific">Brucella abortus biovar 1 (strain 9-941)</name>
    <dbReference type="NCBI Taxonomy" id="262698"/>
    <lineage>
        <taxon>Bacteria</taxon>
        <taxon>Pseudomonadati</taxon>
        <taxon>Pseudomonadota</taxon>
        <taxon>Alphaproteobacteria</taxon>
        <taxon>Hyphomicrobiales</taxon>
        <taxon>Brucellaceae</taxon>
        <taxon>Brucella/Ochrobactrum group</taxon>
        <taxon>Brucella</taxon>
    </lineage>
</organism>
<proteinExistence type="inferred from homology"/>
<evidence type="ECO:0000255" key="1">
    <source>
        <dbReference type="HAMAP-Rule" id="MF_01139"/>
    </source>
</evidence>
<accession>Q57CY1</accession>